<gene>
    <name evidence="1" type="primary">acsA</name>
    <name type="ordered locus">CV_3282</name>
</gene>
<protein>
    <recommendedName>
        <fullName evidence="1">Acetyl-coenzyme A synthetase</fullName>
        <shortName evidence="1">AcCoA synthetase</shortName>
        <shortName evidence="1">Acs</shortName>
        <ecNumber evidence="1">6.2.1.1</ecNumber>
    </recommendedName>
    <alternativeName>
        <fullName evidence="1">Acetate--CoA ligase</fullName>
    </alternativeName>
    <alternativeName>
        <fullName evidence="1">Acyl-activating enzyme</fullName>
    </alternativeName>
</protein>
<feature type="chain" id="PRO_1000065288" description="Acetyl-coenzyme A synthetase">
    <location>
        <begin position="1"/>
        <end position="654"/>
    </location>
</feature>
<feature type="binding site" evidence="1">
    <location>
        <begin position="196"/>
        <end position="199"/>
    </location>
    <ligand>
        <name>CoA</name>
        <dbReference type="ChEBI" id="CHEBI:57287"/>
    </ligand>
</feature>
<feature type="binding site" evidence="1">
    <location>
        <position position="316"/>
    </location>
    <ligand>
        <name>CoA</name>
        <dbReference type="ChEBI" id="CHEBI:57287"/>
    </ligand>
</feature>
<feature type="binding site" evidence="1">
    <location>
        <begin position="392"/>
        <end position="394"/>
    </location>
    <ligand>
        <name>ATP</name>
        <dbReference type="ChEBI" id="CHEBI:30616"/>
    </ligand>
</feature>
<feature type="binding site" evidence="1">
    <location>
        <begin position="416"/>
        <end position="421"/>
    </location>
    <ligand>
        <name>ATP</name>
        <dbReference type="ChEBI" id="CHEBI:30616"/>
    </ligand>
</feature>
<feature type="binding site" evidence="1">
    <location>
        <position position="507"/>
    </location>
    <ligand>
        <name>ATP</name>
        <dbReference type="ChEBI" id="CHEBI:30616"/>
    </ligand>
</feature>
<feature type="binding site" evidence="1">
    <location>
        <position position="522"/>
    </location>
    <ligand>
        <name>ATP</name>
        <dbReference type="ChEBI" id="CHEBI:30616"/>
    </ligand>
</feature>
<feature type="binding site" evidence="1">
    <location>
        <position position="530"/>
    </location>
    <ligand>
        <name>CoA</name>
        <dbReference type="ChEBI" id="CHEBI:57287"/>
    </ligand>
</feature>
<feature type="binding site" evidence="1">
    <location>
        <position position="533"/>
    </location>
    <ligand>
        <name>ATP</name>
        <dbReference type="ChEBI" id="CHEBI:30616"/>
    </ligand>
</feature>
<feature type="binding site" evidence="1">
    <location>
        <position position="544"/>
    </location>
    <ligand>
        <name>Mg(2+)</name>
        <dbReference type="ChEBI" id="CHEBI:18420"/>
    </ligand>
</feature>
<feature type="binding site" evidence="1">
    <location>
        <position position="549"/>
    </location>
    <ligand>
        <name>Mg(2+)</name>
        <dbReference type="ChEBI" id="CHEBI:18420"/>
    </ligand>
</feature>
<feature type="modified residue" description="N6-acetyllysine" evidence="1">
    <location>
        <position position="619"/>
    </location>
</feature>
<keyword id="KW-0007">Acetylation</keyword>
<keyword id="KW-0067">ATP-binding</keyword>
<keyword id="KW-0436">Ligase</keyword>
<keyword id="KW-0460">Magnesium</keyword>
<keyword id="KW-0479">Metal-binding</keyword>
<keyword id="KW-0547">Nucleotide-binding</keyword>
<keyword id="KW-1185">Reference proteome</keyword>
<reference key="1">
    <citation type="journal article" date="2003" name="Proc. Natl. Acad. Sci. U.S.A.">
        <title>The complete genome sequence of Chromobacterium violaceum reveals remarkable and exploitable bacterial adaptability.</title>
        <authorList>
            <person name="Vasconcelos A.T.R."/>
            <person name="de Almeida D.F."/>
            <person name="Hungria M."/>
            <person name="Guimaraes C.T."/>
            <person name="Antonio R.V."/>
            <person name="Almeida F.C."/>
            <person name="de Almeida L.G.P."/>
            <person name="de Almeida R."/>
            <person name="Alves-Gomes J.A."/>
            <person name="Andrade E.M."/>
            <person name="Araripe J."/>
            <person name="de Araujo M.F.F."/>
            <person name="Astolfi-Filho S."/>
            <person name="Azevedo V."/>
            <person name="Baptista A.J."/>
            <person name="Bataus L.A.M."/>
            <person name="Batista J.S."/>
            <person name="Belo A."/>
            <person name="van den Berg C."/>
            <person name="Bogo M."/>
            <person name="Bonatto S."/>
            <person name="Bordignon J."/>
            <person name="Brigido M.M."/>
            <person name="Brito C.A."/>
            <person name="Brocchi M."/>
            <person name="Burity H.A."/>
            <person name="Camargo A.A."/>
            <person name="Cardoso D.D.P."/>
            <person name="Carneiro N.P."/>
            <person name="Carraro D.M."/>
            <person name="Carvalho C.M.B."/>
            <person name="Cascardo J.C.M."/>
            <person name="Cavada B.S."/>
            <person name="Chueire L.M.O."/>
            <person name="Creczynski-Pasa T.B."/>
            <person name="Cunha-Junior N.C."/>
            <person name="Fagundes N."/>
            <person name="Falcao C.L."/>
            <person name="Fantinatti F."/>
            <person name="Farias I.P."/>
            <person name="Felipe M.S.S."/>
            <person name="Ferrari L.P."/>
            <person name="Ferro J.A."/>
            <person name="Ferro M.I.T."/>
            <person name="Franco G.R."/>
            <person name="Freitas N.S.A."/>
            <person name="Furlan L.R."/>
            <person name="Gazzinelli R.T."/>
            <person name="Gomes E.A."/>
            <person name="Goncalves P.R."/>
            <person name="Grangeiro T.B."/>
            <person name="Grattapaglia D."/>
            <person name="Grisard E.C."/>
            <person name="Hanna E.S."/>
            <person name="Jardim S.N."/>
            <person name="Laurino J."/>
            <person name="Leoi L.C.T."/>
            <person name="Lima L.F.A."/>
            <person name="Loureiro M.F."/>
            <person name="Lyra M.C.C.P."/>
            <person name="Madeira H.M.F."/>
            <person name="Manfio G.P."/>
            <person name="Maranhao A.Q."/>
            <person name="Martins W.S."/>
            <person name="di Mauro S.M.Z."/>
            <person name="de Medeiros S.R.B."/>
            <person name="Meissner R.V."/>
            <person name="Moreira M.A.M."/>
            <person name="Nascimento F.F."/>
            <person name="Nicolas M.F."/>
            <person name="Oliveira J.G."/>
            <person name="Oliveira S.C."/>
            <person name="Paixao R.F.C."/>
            <person name="Parente J.A."/>
            <person name="Pedrosa F.O."/>
            <person name="Pena S.D.J."/>
            <person name="Pereira J.O."/>
            <person name="Pereira M."/>
            <person name="Pinto L.S.R.C."/>
            <person name="Pinto L.S."/>
            <person name="Porto J.I.R."/>
            <person name="Potrich D.P."/>
            <person name="Ramalho-Neto C.E."/>
            <person name="Reis A.M.M."/>
            <person name="Rigo L.U."/>
            <person name="Rondinelli E."/>
            <person name="Santos E.B.P."/>
            <person name="Santos F.R."/>
            <person name="Schneider M.P.C."/>
            <person name="Seuanez H.N."/>
            <person name="Silva A.M.R."/>
            <person name="da Silva A.L.C."/>
            <person name="Silva D.W."/>
            <person name="Silva R."/>
            <person name="Simoes I.C."/>
            <person name="Simon D."/>
            <person name="Soares C.M.A."/>
            <person name="Soares R.B.A."/>
            <person name="Souza E.M."/>
            <person name="Souza K.R.L."/>
            <person name="Souza R.C."/>
            <person name="Steffens M.B.R."/>
            <person name="Steindel M."/>
            <person name="Teixeira S.R."/>
            <person name="Urmenyi T."/>
            <person name="Vettore A."/>
            <person name="Wassem R."/>
            <person name="Zaha A."/>
            <person name="Simpson A.J.G."/>
        </authorList>
    </citation>
    <scope>NUCLEOTIDE SEQUENCE [LARGE SCALE GENOMIC DNA]</scope>
    <source>
        <strain>ATCC 12472 / DSM 30191 / JCM 1249 / CCUG 213 / NBRC 12614 / NCIMB 9131 / NCTC 9757 / MK</strain>
    </source>
</reference>
<organism>
    <name type="scientific">Chromobacterium violaceum (strain ATCC 12472 / DSM 30191 / JCM 1249 / CCUG 213 / NBRC 12614 / NCIMB 9131 / NCTC 9757 / MK)</name>
    <dbReference type="NCBI Taxonomy" id="243365"/>
    <lineage>
        <taxon>Bacteria</taxon>
        <taxon>Pseudomonadati</taxon>
        <taxon>Pseudomonadota</taxon>
        <taxon>Betaproteobacteria</taxon>
        <taxon>Neisseriales</taxon>
        <taxon>Chromobacteriaceae</taxon>
        <taxon>Chromobacterium</taxon>
    </lineage>
</organism>
<evidence type="ECO:0000255" key="1">
    <source>
        <dbReference type="HAMAP-Rule" id="MF_01123"/>
    </source>
</evidence>
<accession>Q7NSY7</accession>
<dbReference type="EC" id="6.2.1.1" evidence="1"/>
<dbReference type="EMBL" id="AE016825">
    <property type="protein sequence ID" value="AAQ60946.1"/>
    <property type="molecule type" value="Genomic_DNA"/>
</dbReference>
<dbReference type="RefSeq" id="WP_011136829.1">
    <property type="nucleotide sequence ID" value="NC_005085.1"/>
</dbReference>
<dbReference type="SMR" id="Q7NSY7"/>
<dbReference type="STRING" id="243365.CV_3282"/>
<dbReference type="KEGG" id="cvi:CV_3282"/>
<dbReference type="eggNOG" id="COG0365">
    <property type="taxonomic scope" value="Bacteria"/>
</dbReference>
<dbReference type="HOGENOM" id="CLU_000022_3_6_4"/>
<dbReference type="OrthoDB" id="9766486at2"/>
<dbReference type="Proteomes" id="UP000001424">
    <property type="component" value="Chromosome"/>
</dbReference>
<dbReference type="GO" id="GO:0005829">
    <property type="term" value="C:cytosol"/>
    <property type="evidence" value="ECO:0007669"/>
    <property type="project" value="TreeGrafter"/>
</dbReference>
<dbReference type="GO" id="GO:0003987">
    <property type="term" value="F:acetate-CoA ligase activity"/>
    <property type="evidence" value="ECO:0007669"/>
    <property type="project" value="UniProtKB-UniRule"/>
</dbReference>
<dbReference type="GO" id="GO:0016208">
    <property type="term" value="F:AMP binding"/>
    <property type="evidence" value="ECO:0007669"/>
    <property type="project" value="InterPro"/>
</dbReference>
<dbReference type="GO" id="GO:0005524">
    <property type="term" value="F:ATP binding"/>
    <property type="evidence" value="ECO:0007669"/>
    <property type="project" value="UniProtKB-KW"/>
</dbReference>
<dbReference type="GO" id="GO:0046872">
    <property type="term" value="F:metal ion binding"/>
    <property type="evidence" value="ECO:0007669"/>
    <property type="project" value="UniProtKB-KW"/>
</dbReference>
<dbReference type="GO" id="GO:0019427">
    <property type="term" value="P:acetyl-CoA biosynthetic process from acetate"/>
    <property type="evidence" value="ECO:0007669"/>
    <property type="project" value="InterPro"/>
</dbReference>
<dbReference type="CDD" id="cd05966">
    <property type="entry name" value="ACS"/>
    <property type="match status" value="1"/>
</dbReference>
<dbReference type="FunFam" id="3.40.50.12780:FF:000001">
    <property type="entry name" value="Acetyl-coenzyme A synthetase"/>
    <property type="match status" value="1"/>
</dbReference>
<dbReference type="Gene3D" id="3.30.300.30">
    <property type="match status" value="1"/>
</dbReference>
<dbReference type="Gene3D" id="3.40.50.12780">
    <property type="entry name" value="N-terminal domain of ligase-like"/>
    <property type="match status" value="1"/>
</dbReference>
<dbReference type="HAMAP" id="MF_01123">
    <property type="entry name" value="Ac_CoA_synth"/>
    <property type="match status" value="1"/>
</dbReference>
<dbReference type="InterPro" id="IPR011904">
    <property type="entry name" value="Ac_CoA_lig"/>
</dbReference>
<dbReference type="InterPro" id="IPR032387">
    <property type="entry name" value="ACAS_N"/>
</dbReference>
<dbReference type="InterPro" id="IPR025110">
    <property type="entry name" value="AMP-bd_C"/>
</dbReference>
<dbReference type="InterPro" id="IPR045851">
    <property type="entry name" value="AMP-bd_C_sf"/>
</dbReference>
<dbReference type="InterPro" id="IPR020845">
    <property type="entry name" value="AMP-binding_CS"/>
</dbReference>
<dbReference type="InterPro" id="IPR000873">
    <property type="entry name" value="AMP-dep_synth/lig_dom"/>
</dbReference>
<dbReference type="InterPro" id="IPR042099">
    <property type="entry name" value="ANL_N_sf"/>
</dbReference>
<dbReference type="NCBIfam" id="TIGR02188">
    <property type="entry name" value="Ac_CoA_lig_AcsA"/>
    <property type="match status" value="1"/>
</dbReference>
<dbReference type="NCBIfam" id="NF001208">
    <property type="entry name" value="PRK00174.1"/>
    <property type="match status" value="1"/>
</dbReference>
<dbReference type="PANTHER" id="PTHR24095">
    <property type="entry name" value="ACETYL-COENZYME A SYNTHETASE"/>
    <property type="match status" value="1"/>
</dbReference>
<dbReference type="PANTHER" id="PTHR24095:SF14">
    <property type="entry name" value="ACETYL-COENZYME A SYNTHETASE 1"/>
    <property type="match status" value="1"/>
</dbReference>
<dbReference type="Pfam" id="PF16177">
    <property type="entry name" value="ACAS_N"/>
    <property type="match status" value="1"/>
</dbReference>
<dbReference type="Pfam" id="PF00501">
    <property type="entry name" value="AMP-binding"/>
    <property type="match status" value="1"/>
</dbReference>
<dbReference type="Pfam" id="PF13193">
    <property type="entry name" value="AMP-binding_C"/>
    <property type="match status" value="1"/>
</dbReference>
<dbReference type="SUPFAM" id="SSF56801">
    <property type="entry name" value="Acetyl-CoA synthetase-like"/>
    <property type="match status" value="1"/>
</dbReference>
<dbReference type="PROSITE" id="PS00455">
    <property type="entry name" value="AMP_BINDING"/>
    <property type="match status" value="1"/>
</dbReference>
<comment type="function">
    <text evidence="1">Catalyzes the conversion of acetate into acetyl-CoA (AcCoA), an essential intermediate at the junction of anabolic and catabolic pathways. AcsA undergoes a two-step reaction. In the first half reaction, AcsA combines acetate with ATP to form acetyl-adenylate (AcAMP) intermediate. In the second half reaction, it can then transfer the acetyl group from AcAMP to the sulfhydryl group of CoA, forming the product AcCoA.</text>
</comment>
<comment type="catalytic activity">
    <reaction evidence="1">
        <text>acetate + ATP + CoA = acetyl-CoA + AMP + diphosphate</text>
        <dbReference type="Rhea" id="RHEA:23176"/>
        <dbReference type="ChEBI" id="CHEBI:30089"/>
        <dbReference type="ChEBI" id="CHEBI:30616"/>
        <dbReference type="ChEBI" id="CHEBI:33019"/>
        <dbReference type="ChEBI" id="CHEBI:57287"/>
        <dbReference type="ChEBI" id="CHEBI:57288"/>
        <dbReference type="ChEBI" id="CHEBI:456215"/>
        <dbReference type="EC" id="6.2.1.1"/>
    </reaction>
</comment>
<comment type="cofactor">
    <cofactor evidence="1">
        <name>Mg(2+)</name>
        <dbReference type="ChEBI" id="CHEBI:18420"/>
    </cofactor>
</comment>
<comment type="PTM">
    <text evidence="1">Acetylated. Deacetylation by the SIR2-homolog deacetylase activates the enzyme.</text>
</comment>
<comment type="similarity">
    <text evidence="1">Belongs to the ATP-dependent AMP-binding enzyme family.</text>
</comment>
<proteinExistence type="inferred from homology"/>
<name>ACSA_CHRVO</name>
<sequence>MSTLDSILKETRSFAPSEEFRRKASISGIEAYHALCEQADDHYLSFWGDLARELITWKKPFSRVLDDSQAPFFKWFDDGVLNASYNCLDRHLAANANKIAIIFEADDGEVTRVTYSELHRRVCQFANGLKSLGVKKGDRVVVYMPMGIEAVVTMQACARIGAIHSVVFGGFSAGAVRDRIQDAGATVVVTANESVRGGKNVPLKATVDEALALEGAESVRHVVVYQRTNGGADWTDGRDVWWHKLIEGQSEACEPEWMGAEDPLFILYTSGSTGKPKGIQHSTAGYLLGALNSFRWVFDYKPNDVFWCTADVGWITGHSYVCYGPLANGATQVIFEGVPTYPDAGRFWKMIEQHKVSIFYTAPTAIRSLIKLGSDLPKQYDLSSLRVLGTVGEPINPEAWIWYYETVGGGRCPIVDTWWQTETGSTMIAPLPGAIATKPGSCTLPLPGVIADIVDESGAQVEPGRGGFLVIKKPFPSLVRTIWNDPERFKKTYFPDEFDGKYYLAGDSAHRDENGYFWIMGRIDDVLNVSGHRLGTMEIESALVANPLVAEAAVVGKPHEVKGEAVVAFVVLKGARPQGDAAKTVAAELKNWVAHEIGKIAQPDDIRFGENLPKTRSGKIMRRLLRSIAKGEEITQDVSTLENPQILQQLQQPL</sequence>